<name>LFTR_IDILO</name>
<comment type="function">
    <text evidence="1">Functions in the N-end rule pathway of protein degradation where it conjugates Leu, Phe and, less efficiently, Met from aminoacyl-tRNAs to the N-termini of proteins containing an N-terminal arginine or lysine.</text>
</comment>
<comment type="catalytic activity">
    <reaction evidence="1">
        <text>N-terminal L-lysyl-[protein] + L-leucyl-tRNA(Leu) = N-terminal L-leucyl-L-lysyl-[protein] + tRNA(Leu) + H(+)</text>
        <dbReference type="Rhea" id="RHEA:12340"/>
        <dbReference type="Rhea" id="RHEA-COMP:9613"/>
        <dbReference type="Rhea" id="RHEA-COMP:9622"/>
        <dbReference type="Rhea" id="RHEA-COMP:12670"/>
        <dbReference type="Rhea" id="RHEA-COMP:12671"/>
        <dbReference type="ChEBI" id="CHEBI:15378"/>
        <dbReference type="ChEBI" id="CHEBI:65249"/>
        <dbReference type="ChEBI" id="CHEBI:78442"/>
        <dbReference type="ChEBI" id="CHEBI:78494"/>
        <dbReference type="ChEBI" id="CHEBI:133043"/>
        <dbReference type="EC" id="2.3.2.6"/>
    </reaction>
</comment>
<comment type="catalytic activity">
    <reaction evidence="1">
        <text>N-terminal L-arginyl-[protein] + L-leucyl-tRNA(Leu) = N-terminal L-leucyl-L-arginyl-[protein] + tRNA(Leu) + H(+)</text>
        <dbReference type="Rhea" id="RHEA:50416"/>
        <dbReference type="Rhea" id="RHEA-COMP:9613"/>
        <dbReference type="Rhea" id="RHEA-COMP:9622"/>
        <dbReference type="Rhea" id="RHEA-COMP:12672"/>
        <dbReference type="Rhea" id="RHEA-COMP:12673"/>
        <dbReference type="ChEBI" id="CHEBI:15378"/>
        <dbReference type="ChEBI" id="CHEBI:64719"/>
        <dbReference type="ChEBI" id="CHEBI:78442"/>
        <dbReference type="ChEBI" id="CHEBI:78494"/>
        <dbReference type="ChEBI" id="CHEBI:133044"/>
        <dbReference type="EC" id="2.3.2.6"/>
    </reaction>
</comment>
<comment type="catalytic activity">
    <reaction evidence="1">
        <text>L-phenylalanyl-tRNA(Phe) + an N-terminal L-alpha-aminoacyl-[protein] = an N-terminal L-phenylalanyl-L-alpha-aminoacyl-[protein] + tRNA(Phe)</text>
        <dbReference type="Rhea" id="RHEA:43632"/>
        <dbReference type="Rhea" id="RHEA-COMP:9668"/>
        <dbReference type="Rhea" id="RHEA-COMP:9699"/>
        <dbReference type="Rhea" id="RHEA-COMP:10636"/>
        <dbReference type="Rhea" id="RHEA-COMP:10637"/>
        <dbReference type="ChEBI" id="CHEBI:78442"/>
        <dbReference type="ChEBI" id="CHEBI:78531"/>
        <dbReference type="ChEBI" id="CHEBI:78597"/>
        <dbReference type="ChEBI" id="CHEBI:83561"/>
        <dbReference type="EC" id="2.3.2.6"/>
    </reaction>
</comment>
<comment type="subcellular location">
    <subcellularLocation>
        <location evidence="1">Cytoplasm</location>
    </subcellularLocation>
</comment>
<comment type="similarity">
    <text evidence="1">Belongs to the L/F-transferase family.</text>
</comment>
<evidence type="ECO:0000255" key="1">
    <source>
        <dbReference type="HAMAP-Rule" id="MF_00688"/>
    </source>
</evidence>
<protein>
    <recommendedName>
        <fullName evidence="1">Leucyl/phenylalanyl-tRNA--protein transferase</fullName>
        <ecNumber evidence="1">2.3.2.6</ecNumber>
    </recommendedName>
    <alternativeName>
        <fullName evidence="1">L/F-transferase</fullName>
    </alternativeName>
    <alternativeName>
        <fullName evidence="1">Leucyltransferase</fullName>
    </alternativeName>
    <alternativeName>
        <fullName evidence="1">Phenyalanyltransferase</fullName>
    </alternativeName>
</protein>
<accession>Q5R0B5</accession>
<keyword id="KW-0012">Acyltransferase</keyword>
<keyword id="KW-0963">Cytoplasm</keyword>
<keyword id="KW-1185">Reference proteome</keyword>
<keyword id="KW-0808">Transferase</keyword>
<feature type="chain" id="PRO_0000207222" description="Leucyl/phenylalanyl-tRNA--protein transferase">
    <location>
        <begin position="1"/>
        <end position="236"/>
    </location>
</feature>
<sequence length="236" mass="26660">MIVQLDPASISFPPAATALHEPNGLLAVGGDLSPGRLIHAYQQGIFPWFSESDPILWWSPNPRAVFFPDQIHTSRSLAKTNRKPNWQMSINCNFAEVVRACADERADKEGTWITEEMIEAYCKLHQLGYAHSVEIWFDNELAGGLYGISVGRAFCGESMFHYKTDASKIALLRFAQYFKKHGGQLIDCQVGNPHLFSLGAVNLHRERFLMKLNIAQQKKMPDTFWQARELPLPGEL</sequence>
<gene>
    <name evidence="1" type="primary">aat</name>
    <name type="ordered locus">IL0671</name>
</gene>
<organism>
    <name type="scientific">Idiomarina loihiensis (strain ATCC BAA-735 / DSM 15497 / L2-TR)</name>
    <dbReference type="NCBI Taxonomy" id="283942"/>
    <lineage>
        <taxon>Bacteria</taxon>
        <taxon>Pseudomonadati</taxon>
        <taxon>Pseudomonadota</taxon>
        <taxon>Gammaproteobacteria</taxon>
        <taxon>Alteromonadales</taxon>
        <taxon>Idiomarinaceae</taxon>
        <taxon>Idiomarina</taxon>
    </lineage>
</organism>
<reference key="1">
    <citation type="journal article" date="2004" name="Proc. Natl. Acad. Sci. U.S.A.">
        <title>Genome sequence of the deep-sea gamma-proteobacterium Idiomarina loihiensis reveals amino acid fermentation as a source of carbon and energy.</title>
        <authorList>
            <person name="Hou S."/>
            <person name="Saw J.H."/>
            <person name="Lee K.S."/>
            <person name="Freitas T.A."/>
            <person name="Belisle C."/>
            <person name="Kawarabayasi Y."/>
            <person name="Donachie S.P."/>
            <person name="Pikina A."/>
            <person name="Galperin M.Y."/>
            <person name="Koonin E.V."/>
            <person name="Makarova K.S."/>
            <person name="Omelchenko M.V."/>
            <person name="Sorokin A."/>
            <person name="Wolf Y.I."/>
            <person name="Li Q.X."/>
            <person name="Keum Y.S."/>
            <person name="Campbell S."/>
            <person name="Denery J."/>
            <person name="Aizawa S."/>
            <person name="Shibata S."/>
            <person name="Malahoff A."/>
            <person name="Alam M."/>
        </authorList>
    </citation>
    <scope>NUCLEOTIDE SEQUENCE [LARGE SCALE GENOMIC DNA]</scope>
    <source>
        <strain>ATCC BAA-735 / DSM 15497 / L2-TR</strain>
    </source>
</reference>
<proteinExistence type="inferred from homology"/>
<dbReference type="EC" id="2.3.2.6" evidence="1"/>
<dbReference type="EMBL" id="AE017340">
    <property type="protein sequence ID" value="AAV81512.1"/>
    <property type="molecule type" value="Genomic_DNA"/>
</dbReference>
<dbReference type="RefSeq" id="WP_011233924.1">
    <property type="nucleotide sequence ID" value="NC_006512.1"/>
</dbReference>
<dbReference type="SMR" id="Q5R0B5"/>
<dbReference type="STRING" id="283942.IL0671"/>
<dbReference type="GeneID" id="41335826"/>
<dbReference type="KEGG" id="ilo:IL0671"/>
<dbReference type="eggNOG" id="COG2360">
    <property type="taxonomic scope" value="Bacteria"/>
</dbReference>
<dbReference type="HOGENOM" id="CLU_075045_0_0_6"/>
<dbReference type="OrthoDB" id="9790282at2"/>
<dbReference type="Proteomes" id="UP000001171">
    <property type="component" value="Chromosome"/>
</dbReference>
<dbReference type="GO" id="GO:0005737">
    <property type="term" value="C:cytoplasm"/>
    <property type="evidence" value="ECO:0007669"/>
    <property type="project" value="UniProtKB-SubCell"/>
</dbReference>
<dbReference type="GO" id="GO:0008914">
    <property type="term" value="F:leucyl-tRNA--protein transferase activity"/>
    <property type="evidence" value="ECO:0007669"/>
    <property type="project" value="UniProtKB-UniRule"/>
</dbReference>
<dbReference type="GO" id="GO:0030163">
    <property type="term" value="P:protein catabolic process"/>
    <property type="evidence" value="ECO:0007669"/>
    <property type="project" value="UniProtKB-UniRule"/>
</dbReference>
<dbReference type="FunFam" id="3.30.70.3550:FF:000001">
    <property type="entry name" value="Leucyl/phenylalanyl-tRNA--protein transferase"/>
    <property type="match status" value="1"/>
</dbReference>
<dbReference type="FunFam" id="3.40.630.70:FF:000001">
    <property type="entry name" value="Leucyl/phenylalanyl-tRNA--protein transferase"/>
    <property type="match status" value="1"/>
</dbReference>
<dbReference type="Gene3D" id="3.40.630.70">
    <property type="entry name" value="Leucyl/phenylalanyl-tRNA-protein transferase, C-terminal domain"/>
    <property type="match status" value="1"/>
</dbReference>
<dbReference type="Gene3D" id="3.30.70.3550">
    <property type="entry name" value="Leucyl/phenylalanyl-tRNA-protein transferase, N-terminal domain"/>
    <property type="match status" value="1"/>
</dbReference>
<dbReference type="HAMAP" id="MF_00688">
    <property type="entry name" value="Leu_Phe_trans"/>
    <property type="match status" value="1"/>
</dbReference>
<dbReference type="InterPro" id="IPR016181">
    <property type="entry name" value="Acyl_CoA_acyltransferase"/>
</dbReference>
<dbReference type="InterPro" id="IPR004616">
    <property type="entry name" value="Leu/Phe-tRNA_Trfase"/>
</dbReference>
<dbReference type="InterPro" id="IPR042203">
    <property type="entry name" value="Leu/Phe-tRNA_Trfase_C"/>
</dbReference>
<dbReference type="InterPro" id="IPR042221">
    <property type="entry name" value="Leu/Phe-tRNA_Trfase_N"/>
</dbReference>
<dbReference type="NCBIfam" id="TIGR00667">
    <property type="entry name" value="aat"/>
    <property type="match status" value="1"/>
</dbReference>
<dbReference type="PANTHER" id="PTHR30098">
    <property type="entry name" value="LEUCYL/PHENYLALANYL-TRNA--PROTEIN TRANSFERASE"/>
    <property type="match status" value="1"/>
</dbReference>
<dbReference type="PANTHER" id="PTHR30098:SF2">
    <property type="entry name" value="LEUCYL_PHENYLALANYL-TRNA--PROTEIN TRANSFERASE"/>
    <property type="match status" value="1"/>
</dbReference>
<dbReference type="Pfam" id="PF03588">
    <property type="entry name" value="Leu_Phe_trans"/>
    <property type="match status" value="1"/>
</dbReference>
<dbReference type="SUPFAM" id="SSF55729">
    <property type="entry name" value="Acyl-CoA N-acyltransferases (Nat)"/>
    <property type="match status" value="1"/>
</dbReference>